<keyword id="KW-0002">3D-structure</keyword>
<keyword id="KW-0903">Direct protein sequencing</keyword>
<keyword id="KW-0274">FAD</keyword>
<keyword id="KW-0285">Flavoprotein</keyword>
<keyword id="KW-0288">FMN</keyword>
<keyword id="KW-0406">Ion transport</keyword>
<keyword id="KW-0408">Iron</keyword>
<keyword id="KW-0410">Iron transport</keyword>
<keyword id="KW-0520">NAD</keyword>
<keyword id="KW-0521">NADP</keyword>
<keyword id="KW-0560">Oxidoreductase</keyword>
<keyword id="KW-1185">Reference proteome</keyword>
<keyword id="KW-0813">Transport</keyword>
<feature type="initiator methionine" description="Removed" evidence="5">
    <location>
        <position position="1"/>
    </location>
</feature>
<feature type="chain" id="PRO_0000068144" description="NAD(P)H-flavin reductase">
    <location>
        <begin position="2"/>
        <end position="233"/>
    </location>
</feature>
<feature type="domain" description="FAD-binding FR-type" evidence="3">
    <location>
        <begin position="2"/>
        <end position="99"/>
    </location>
</feature>
<feature type="binding site" evidence="1">
    <location>
        <begin position="111"/>
        <end position="115"/>
    </location>
    <ligand>
        <name>pyridine</name>
        <dbReference type="ChEBI" id="CHEBI:16227"/>
    </ligand>
</feature>
<feature type="strand" evidence="8">
    <location>
        <begin position="3"/>
        <end position="17"/>
    </location>
</feature>
<feature type="strand" evidence="8">
    <location>
        <begin position="19"/>
        <end position="27"/>
    </location>
</feature>
<feature type="strand" evidence="8">
    <location>
        <begin position="36"/>
        <end position="44"/>
    </location>
</feature>
<feature type="strand" evidence="8">
    <location>
        <begin position="46"/>
        <end position="50"/>
    </location>
</feature>
<feature type="strand" evidence="8">
    <location>
        <begin position="61"/>
        <end position="65"/>
    </location>
</feature>
<feature type="helix" evidence="8">
    <location>
        <begin position="75"/>
        <end position="84"/>
    </location>
</feature>
<feature type="strand" evidence="8">
    <location>
        <begin position="85"/>
        <end position="93"/>
    </location>
</feature>
<feature type="strand" evidence="8">
    <location>
        <begin position="102"/>
        <end position="104"/>
    </location>
</feature>
<feature type="strand" evidence="8">
    <location>
        <begin position="106"/>
        <end position="111"/>
    </location>
</feature>
<feature type="helix" evidence="8">
    <location>
        <begin position="115"/>
        <end position="128"/>
    </location>
</feature>
<feature type="strand" evidence="8">
    <location>
        <begin position="134"/>
        <end position="142"/>
    </location>
</feature>
<feature type="helix" evidence="8">
    <location>
        <begin position="143"/>
        <end position="145"/>
    </location>
</feature>
<feature type="helix" evidence="8">
    <location>
        <begin position="149"/>
        <end position="158"/>
    </location>
</feature>
<feature type="strand" evidence="8">
    <location>
        <begin position="162"/>
        <end position="170"/>
    </location>
</feature>
<feature type="strand" evidence="8">
    <location>
        <begin position="177"/>
        <end position="180"/>
    </location>
</feature>
<feature type="helix" evidence="8">
    <location>
        <begin position="182"/>
        <end position="189"/>
    </location>
</feature>
<feature type="strand" evidence="8">
    <location>
        <begin position="197"/>
        <end position="202"/>
    </location>
</feature>
<feature type="helix" evidence="8">
    <location>
        <begin position="204"/>
        <end position="217"/>
    </location>
</feature>
<feature type="helix" evidence="8">
    <location>
        <begin position="222"/>
        <end position="224"/>
    </location>
</feature>
<feature type="helix" evidence="8">
    <location>
        <begin position="229"/>
        <end position="232"/>
    </location>
</feature>
<organism>
    <name type="scientific">Escherichia coli (strain K12)</name>
    <dbReference type="NCBI Taxonomy" id="83333"/>
    <lineage>
        <taxon>Bacteria</taxon>
        <taxon>Pseudomonadati</taxon>
        <taxon>Pseudomonadota</taxon>
        <taxon>Gammaproteobacteria</taxon>
        <taxon>Enterobacterales</taxon>
        <taxon>Enterobacteriaceae</taxon>
        <taxon>Escherichia</taxon>
    </lineage>
</organism>
<dbReference type="EC" id="1.5.1.41" evidence="2"/>
<dbReference type="EMBL" id="M61182">
    <property type="protein sequence ID" value="AAA23806.1"/>
    <property type="molecule type" value="Genomic_DNA"/>
</dbReference>
<dbReference type="EMBL" id="M85227">
    <property type="protein sequence ID" value="AAA23753.1"/>
    <property type="molecule type" value="Genomic_DNA"/>
</dbReference>
<dbReference type="EMBL" id="M74448">
    <property type="protein sequence ID" value="AAA91058.1"/>
    <property type="molecule type" value="Genomic_DNA"/>
</dbReference>
<dbReference type="EMBL" id="M87049">
    <property type="protein sequence ID" value="AAA67641.1"/>
    <property type="molecule type" value="Genomic_DNA"/>
</dbReference>
<dbReference type="EMBL" id="U00096">
    <property type="protein sequence ID" value="AAC76847.1"/>
    <property type="molecule type" value="Genomic_DNA"/>
</dbReference>
<dbReference type="EMBL" id="AP009048">
    <property type="protein sequence ID" value="BAE77459.1"/>
    <property type="molecule type" value="Genomic_DNA"/>
</dbReference>
<dbReference type="PIR" id="A39434">
    <property type="entry name" value="A39434"/>
</dbReference>
<dbReference type="RefSeq" id="NP_418286.1">
    <property type="nucleotide sequence ID" value="NC_000913.3"/>
</dbReference>
<dbReference type="RefSeq" id="WP_000209826.1">
    <property type="nucleotide sequence ID" value="NZ_STEB01000021.1"/>
</dbReference>
<dbReference type="PDB" id="1QFJ">
    <property type="method" value="X-ray"/>
    <property type="resolution" value="2.20 A"/>
    <property type="chains" value="A/B/C/D=2-233"/>
</dbReference>
<dbReference type="PDBsum" id="1QFJ"/>
<dbReference type="SMR" id="P0AEN1"/>
<dbReference type="BioGRID" id="4262003">
    <property type="interactions" value="29"/>
</dbReference>
<dbReference type="FunCoup" id="P0AEN1">
    <property type="interactions" value="329"/>
</dbReference>
<dbReference type="IntAct" id="P0AEN1">
    <property type="interactions" value="14"/>
</dbReference>
<dbReference type="STRING" id="511145.b3844"/>
<dbReference type="jPOST" id="P0AEN1"/>
<dbReference type="PaxDb" id="511145-b3844"/>
<dbReference type="EnsemblBacteria" id="AAC76847">
    <property type="protein sequence ID" value="AAC76847"/>
    <property type="gene ID" value="b3844"/>
</dbReference>
<dbReference type="GeneID" id="93778093"/>
<dbReference type="GeneID" id="948325"/>
<dbReference type="KEGG" id="ecj:JW3820"/>
<dbReference type="KEGG" id="eco:b3844"/>
<dbReference type="KEGG" id="ecoc:C3026_20785"/>
<dbReference type="PATRIC" id="fig|511145.12.peg.3958"/>
<dbReference type="EchoBASE" id="EB0330"/>
<dbReference type="eggNOG" id="COG0543">
    <property type="taxonomic scope" value="Bacteria"/>
</dbReference>
<dbReference type="HOGENOM" id="CLU_003827_7_4_6"/>
<dbReference type="InParanoid" id="P0AEN1"/>
<dbReference type="OMA" id="PCRHEGE"/>
<dbReference type="OrthoDB" id="9806195at2"/>
<dbReference type="PhylomeDB" id="P0AEN1"/>
<dbReference type="BioCyc" id="EcoCyc:FMNREDUCT-MONOMER"/>
<dbReference type="BioCyc" id="MetaCyc:FMNREDUCT-MONOMER"/>
<dbReference type="BRENDA" id="1.5.1.41">
    <property type="organism ID" value="2026"/>
</dbReference>
<dbReference type="EvolutionaryTrace" id="P0AEN1"/>
<dbReference type="PRO" id="PR:P0AEN1"/>
<dbReference type="Proteomes" id="UP000000625">
    <property type="component" value="Chromosome"/>
</dbReference>
<dbReference type="GO" id="GO:0005829">
    <property type="term" value="C:cytosol"/>
    <property type="evidence" value="ECO:0000314"/>
    <property type="project" value="EcoCyc"/>
</dbReference>
<dbReference type="GO" id="GO:0008047">
    <property type="term" value="F:enzyme activator activity"/>
    <property type="evidence" value="ECO:0000314"/>
    <property type="project" value="EcoCyc"/>
</dbReference>
<dbReference type="GO" id="GO:0042602">
    <property type="term" value="F:riboflavin reductase (NADPH) activity"/>
    <property type="evidence" value="ECO:0000314"/>
    <property type="project" value="EcoCyc"/>
</dbReference>
<dbReference type="GO" id="GO:0052875">
    <property type="term" value="F:riboflavin reductase [NAD(P)H] activity"/>
    <property type="evidence" value="ECO:0000314"/>
    <property type="project" value="EcoCyc"/>
</dbReference>
<dbReference type="GO" id="GO:0006826">
    <property type="term" value="P:iron ion transport"/>
    <property type="evidence" value="ECO:0007669"/>
    <property type="project" value="UniProtKB-KW"/>
</dbReference>
<dbReference type="GO" id="GO:0030091">
    <property type="term" value="P:protein repair"/>
    <property type="evidence" value="ECO:0000315"/>
    <property type="project" value="EcoCyc"/>
</dbReference>
<dbReference type="GO" id="GO:0006979">
    <property type="term" value="P:response to oxidative stress"/>
    <property type="evidence" value="ECO:0000315"/>
    <property type="project" value="EcoCyc"/>
</dbReference>
<dbReference type="CDD" id="cd06189">
    <property type="entry name" value="flavin_oxioreductase"/>
    <property type="match status" value="1"/>
</dbReference>
<dbReference type="FunFam" id="2.40.30.10:FF:000042">
    <property type="entry name" value="NAD(P)H-flavin reductase"/>
    <property type="match status" value="1"/>
</dbReference>
<dbReference type="FunFam" id="3.40.50.80:FF:000016">
    <property type="entry name" value="NAD(P)H-flavin reductase"/>
    <property type="match status" value="1"/>
</dbReference>
<dbReference type="Gene3D" id="3.40.50.80">
    <property type="entry name" value="Nucleotide-binding domain of ferredoxin-NADP reductase (FNR) module"/>
    <property type="match status" value="1"/>
</dbReference>
<dbReference type="Gene3D" id="2.40.30.10">
    <property type="entry name" value="Translation factors"/>
    <property type="match status" value="1"/>
</dbReference>
<dbReference type="InterPro" id="IPR008333">
    <property type="entry name" value="Cbr1-like_FAD-bd_dom"/>
</dbReference>
<dbReference type="InterPro" id="IPR017927">
    <property type="entry name" value="FAD-bd_FR_type"/>
</dbReference>
<dbReference type="InterPro" id="IPR039261">
    <property type="entry name" value="FNR_nucleotide-bd"/>
</dbReference>
<dbReference type="InterPro" id="IPR001433">
    <property type="entry name" value="OxRdtase_FAD/NAD-bd"/>
</dbReference>
<dbReference type="InterPro" id="IPR017938">
    <property type="entry name" value="Riboflavin_synthase-like_b-brl"/>
</dbReference>
<dbReference type="NCBIfam" id="NF005963">
    <property type="entry name" value="PRK08051.1"/>
    <property type="match status" value="1"/>
</dbReference>
<dbReference type="PANTHER" id="PTHR43644">
    <property type="entry name" value="NA(+)-TRANSLOCATING NADH-QUINONE REDUCTASE SUBUNIT"/>
    <property type="match status" value="1"/>
</dbReference>
<dbReference type="PANTHER" id="PTHR43644:SF1">
    <property type="entry name" value="NAD(P)H-FLAVIN REDUCTASE"/>
    <property type="match status" value="1"/>
</dbReference>
<dbReference type="Pfam" id="PF00970">
    <property type="entry name" value="FAD_binding_6"/>
    <property type="match status" value="1"/>
</dbReference>
<dbReference type="Pfam" id="PF00175">
    <property type="entry name" value="NAD_binding_1"/>
    <property type="match status" value="1"/>
</dbReference>
<dbReference type="PRINTS" id="PR00410">
    <property type="entry name" value="PHEHYDRXLASE"/>
</dbReference>
<dbReference type="SUPFAM" id="SSF52343">
    <property type="entry name" value="Ferredoxin reductase-like, C-terminal NADP-linked domain"/>
    <property type="match status" value="1"/>
</dbReference>
<dbReference type="SUPFAM" id="SSF63380">
    <property type="entry name" value="Riboflavin synthase domain-like"/>
    <property type="match status" value="1"/>
</dbReference>
<dbReference type="PROSITE" id="PS51384">
    <property type="entry name" value="FAD_FR"/>
    <property type="match status" value="1"/>
</dbReference>
<accession>P0AEN1</accession>
<accession>P23486</accession>
<accession>P76768</accession>
<accession>Q2M8E7</accession>
<name>FRE_ECOLI</name>
<protein>
    <recommendedName>
        <fullName>NAD(P)H-flavin reductase</fullName>
        <ecNumber evidence="2">1.5.1.41</ecNumber>
    </recommendedName>
    <alternativeName>
        <fullName>FMN reductase</fullName>
    </alternativeName>
    <alternativeName>
        <fullName>Ferrisiderophore reductase C</fullName>
    </alternativeName>
    <alternativeName>
        <fullName>NAD(P)H:flavin oxidoreductase</fullName>
    </alternativeName>
    <alternativeName>
        <fullName>Riboflavin reductase [NAD(P)H]</fullName>
    </alternativeName>
</protein>
<reference key="1">
    <citation type="journal article" date="1991" name="J. Bacteriol.">
        <title>Characterization of the flavin reductase gene (fre) of Escherichia coli and construction of a plasmid for overproduction of the enzyme.</title>
        <authorList>
            <person name="Spyrou G."/>
            <person name="Haggaard-Ljungquist E."/>
            <person name="Krook M."/>
            <person name="Joernvall H."/>
            <person name="Nilsson E."/>
            <person name="Reichard P."/>
        </authorList>
    </citation>
    <scope>NUCLEOTIDE SEQUENCE [GENOMIC DNA]</scope>
    <scope>PROTEIN SEQUENCE OF 2-21</scope>
</reference>
<reference key="2">
    <citation type="submission" date="1992-01" db="EMBL/GenBank/DDBJ databases">
        <title>FadI: identification, characterization, and nucleotide sequence of a gene required for full activation of structural genes of the AD regulon in Escherichia coli.</title>
        <authorList>
            <person name="Dirusso C.C."/>
            <person name="Shea O."/>
        </authorList>
    </citation>
    <scope>NUCLEOTIDE SEQUENCE [GENOMIC DNA]</scope>
    <source>
        <strain>K12</strain>
    </source>
</reference>
<reference key="3">
    <citation type="submission" date="1996-03" db="EMBL/GenBank/DDBJ databases">
        <authorList>
            <person name="Saviranta P.J."/>
        </authorList>
    </citation>
    <scope>NUCLEOTIDE SEQUENCE [GENOMIC DNA]</scope>
    <source>
        <strain>K12</strain>
    </source>
</reference>
<reference key="4">
    <citation type="journal article" date="1992" name="Science">
        <title>Analysis of the Escherichia coli genome: DNA sequence of the region from 84.5 to 86.5 minutes.</title>
        <authorList>
            <person name="Daniels D.L."/>
            <person name="Plunkett G. III"/>
            <person name="Burland V.D."/>
            <person name="Blattner F.R."/>
        </authorList>
    </citation>
    <scope>NUCLEOTIDE SEQUENCE [LARGE SCALE GENOMIC DNA]</scope>
    <source>
        <strain>K12 / MG1655 / ATCC 47076</strain>
    </source>
</reference>
<reference key="5">
    <citation type="journal article" date="1997" name="Science">
        <title>The complete genome sequence of Escherichia coli K-12.</title>
        <authorList>
            <person name="Blattner F.R."/>
            <person name="Plunkett G. III"/>
            <person name="Bloch C.A."/>
            <person name="Perna N.T."/>
            <person name="Burland V."/>
            <person name="Riley M."/>
            <person name="Collado-Vides J."/>
            <person name="Glasner J.D."/>
            <person name="Rode C.K."/>
            <person name="Mayhew G.F."/>
            <person name="Gregor J."/>
            <person name="Davis N.W."/>
            <person name="Kirkpatrick H.A."/>
            <person name="Goeden M.A."/>
            <person name="Rose D.J."/>
            <person name="Mau B."/>
            <person name="Shao Y."/>
        </authorList>
    </citation>
    <scope>NUCLEOTIDE SEQUENCE [LARGE SCALE GENOMIC DNA]</scope>
    <source>
        <strain>K12 / MG1655 / ATCC 47076</strain>
    </source>
</reference>
<reference key="6">
    <citation type="journal article" date="2006" name="Mol. Syst. Biol.">
        <title>Highly accurate genome sequences of Escherichia coli K-12 strains MG1655 and W3110.</title>
        <authorList>
            <person name="Hayashi K."/>
            <person name="Morooka N."/>
            <person name="Yamamoto Y."/>
            <person name="Fujita K."/>
            <person name="Isono K."/>
            <person name="Choi S."/>
            <person name="Ohtsubo E."/>
            <person name="Baba T."/>
            <person name="Wanner B.L."/>
            <person name="Mori H."/>
            <person name="Horiuchi T."/>
        </authorList>
    </citation>
    <scope>NUCLEOTIDE SEQUENCE [LARGE SCALE GENOMIC DNA]</scope>
    <source>
        <strain>K12 / W3110 / ATCC 27325 / DSM 5911</strain>
    </source>
</reference>
<reference key="7">
    <citation type="journal article" date="1992" name="FEBS Lett.">
        <title>The haemoglobin-like protein (HMP) of Escherichia coli has ferrisiderophore reductase activity and its C-terminal domain shares homology with ferredoxin NADP+ reductases.</title>
        <authorList>
            <person name="Andrews S.C."/>
            <person name="Shipley D."/>
            <person name="Keen J.N."/>
            <person name="Findlay J.B.C."/>
            <person name="Harrison P.M."/>
            <person name="Guest J.R."/>
        </authorList>
    </citation>
    <scope>CHARACTERIZATION</scope>
    <scope>SUBUNIT</scope>
    <source>
        <strain>K12</strain>
    </source>
</reference>
<reference key="8">
    <citation type="journal article" date="1999" name="Biochemistry">
        <title>Crystal structure of NAD(P)H:flavin oxidoreductase from Escherichia coli.</title>
        <authorList>
            <person name="Ingelman M."/>
            <person name="Ramaswamy S."/>
            <person name="Niviere V."/>
            <person name="Fontecave M."/>
            <person name="Eklund H."/>
        </authorList>
    </citation>
    <scope>X-RAY CRYSTALLOGRAPHY (2.2 ANGSTROMS)</scope>
</reference>
<gene>
    <name type="primary">fre</name>
    <name type="synonym">fadI</name>
    <name type="synonym">flrD</name>
    <name type="synonym">fsrC</name>
    <name type="synonym">ubiB</name>
    <name type="ordered locus">b3844</name>
    <name type="ordered locus">JW3820</name>
</gene>
<proteinExistence type="evidence at protein level"/>
<evidence type="ECO:0000250" key="1"/>
<evidence type="ECO:0000250" key="2">
    <source>
        <dbReference type="UniProtKB" id="Q9L6L9"/>
    </source>
</evidence>
<evidence type="ECO:0000255" key="3">
    <source>
        <dbReference type="PROSITE-ProRule" id="PRU00716"/>
    </source>
</evidence>
<evidence type="ECO:0000269" key="4">
    <source>
    </source>
</evidence>
<evidence type="ECO:0000269" key="5">
    <source>
    </source>
</evidence>
<evidence type="ECO:0000305" key="6"/>
<evidence type="ECO:0000305" key="7">
    <source>
    </source>
</evidence>
<evidence type="ECO:0007829" key="8">
    <source>
        <dbReference type="PDB" id="1QFJ"/>
    </source>
</evidence>
<comment type="function">
    <text evidence="2">Catalyzes the reduction of soluble flavins by reduced pyridine nucleotides.</text>
</comment>
<comment type="catalytic activity">
    <reaction evidence="2">
        <text>reduced riboflavin + NADP(+) = riboflavin + NADPH + 2 H(+)</text>
        <dbReference type="Rhea" id="RHEA:19377"/>
        <dbReference type="ChEBI" id="CHEBI:15378"/>
        <dbReference type="ChEBI" id="CHEBI:17607"/>
        <dbReference type="ChEBI" id="CHEBI:57783"/>
        <dbReference type="ChEBI" id="CHEBI:57986"/>
        <dbReference type="ChEBI" id="CHEBI:58349"/>
        <dbReference type="EC" id="1.5.1.41"/>
    </reaction>
</comment>
<comment type="catalytic activity">
    <reaction evidence="2">
        <text>reduced riboflavin + NAD(+) = riboflavin + NADH + 2 H(+)</text>
        <dbReference type="Rhea" id="RHEA:31455"/>
        <dbReference type="ChEBI" id="CHEBI:15378"/>
        <dbReference type="ChEBI" id="CHEBI:17607"/>
        <dbReference type="ChEBI" id="CHEBI:57540"/>
        <dbReference type="ChEBI" id="CHEBI:57945"/>
        <dbReference type="ChEBI" id="CHEBI:57986"/>
        <dbReference type="EC" id="1.5.1.41"/>
    </reaction>
</comment>
<comment type="subunit">
    <text evidence="4">Monomer.</text>
</comment>
<comment type="similarity">
    <text evidence="6">Belongs to the Fre/LuxG FAD/NAD(P) flavoprotein oxidoreductase family.</text>
</comment>
<comment type="caution">
    <text evidence="7">Was originally assigned to be ubiB.</text>
</comment>
<sequence>MTTLSCKVTSVEAITDTVYRVRIVPDAAFSFRAGQYLMVVMDERDKRPFSMASTPDEKGFIELHIGASEINLYAKAVMDRILKDHQIVVDIPHGEAWLRDDEERPMILIAGGTGFSYARSILLTALARNPNRDITIYWGGREEQHLYDLCELEALSLKHPGLQVVPVVEQPEAGWRGRTGTVLTAVLQDHGTLAEHDIYIAGRFEMAKIARDLFCSERNAREDRLFGDAFAFI</sequence>